<dbReference type="EC" id="2.7.1.23" evidence="1"/>
<dbReference type="EMBL" id="CP001404">
    <property type="protein sequence ID" value="ACP47234.1"/>
    <property type="molecule type" value="Genomic_DNA"/>
</dbReference>
<dbReference type="RefSeq" id="WP_012710214.1">
    <property type="nucleotide sequence ID" value="NC_012623.1"/>
</dbReference>
<dbReference type="SMR" id="C3NJ67"/>
<dbReference type="KEGG" id="sin:YN1551_0035"/>
<dbReference type="HOGENOM" id="CLU_008831_0_3_2"/>
<dbReference type="Proteomes" id="UP000006818">
    <property type="component" value="Chromosome"/>
</dbReference>
<dbReference type="GO" id="GO:0005737">
    <property type="term" value="C:cytoplasm"/>
    <property type="evidence" value="ECO:0007669"/>
    <property type="project" value="UniProtKB-SubCell"/>
</dbReference>
<dbReference type="GO" id="GO:0005524">
    <property type="term" value="F:ATP binding"/>
    <property type="evidence" value="ECO:0007669"/>
    <property type="project" value="UniProtKB-KW"/>
</dbReference>
<dbReference type="GO" id="GO:0046872">
    <property type="term" value="F:metal ion binding"/>
    <property type="evidence" value="ECO:0007669"/>
    <property type="project" value="UniProtKB-UniRule"/>
</dbReference>
<dbReference type="GO" id="GO:0003951">
    <property type="term" value="F:NAD+ kinase activity"/>
    <property type="evidence" value="ECO:0007669"/>
    <property type="project" value="UniProtKB-UniRule"/>
</dbReference>
<dbReference type="GO" id="GO:0019674">
    <property type="term" value="P:NAD metabolic process"/>
    <property type="evidence" value="ECO:0007669"/>
    <property type="project" value="InterPro"/>
</dbReference>
<dbReference type="GO" id="GO:0006741">
    <property type="term" value="P:NADP biosynthetic process"/>
    <property type="evidence" value="ECO:0007669"/>
    <property type="project" value="UniProtKB-UniRule"/>
</dbReference>
<dbReference type="Gene3D" id="3.40.50.10330">
    <property type="entry name" value="Probable inorganic polyphosphate/atp-NAD kinase, domain 1"/>
    <property type="match status" value="1"/>
</dbReference>
<dbReference type="Gene3D" id="2.60.200.30">
    <property type="entry name" value="Probable inorganic polyphosphate/atp-NAD kinase, domain 2"/>
    <property type="match status" value="1"/>
</dbReference>
<dbReference type="HAMAP" id="MF_00361">
    <property type="entry name" value="NAD_kinase"/>
    <property type="match status" value="1"/>
</dbReference>
<dbReference type="InterPro" id="IPR017438">
    <property type="entry name" value="ATP-NAD_kinase_N"/>
</dbReference>
<dbReference type="InterPro" id="IPR017437">
    <property type="entry name" value="ATP-NAD_kinase_PpnK-typ_C"/>
</dbReference>
<dbReference type="InterPro" id="IPR016064">
    <property type="entry name" value="NAD/diacylglycerol_kinase_sf"/>
</dbReference>
<dbReference type="InterPro" id="IPR002504">
    <property type="entry name" value="NADK"/>
</dbReference>
<dbReference type="PANTHER" id="PTHR20275:SF43">
    <property type="entry name" value="BIFUNCTIONAL NADP PHOSPHATASE_NAD KINASE"/>
    <property type="match status" value="1"/>
</dbReference>
<dbReference type="PANTHER" id="PTHR20275">
    <property type="entry name" value="NAD KINASE"/>
    <property type="match status" value="1"/>
</dbReference>
<dbReference type="Pfam" id="PF01513">
    <property type="entry name" value="NAD_kinase"/>
    <property type="match status" value="1"/>
</dbReference>
<dbReference type="Pfam" id="PF20143">
    <property type="entry name" value="NAD_kinase_C"/>
    <property type="match status" value="1"/>
</dbReference>
<dbReference type="SUPFAM" id="SSF111331">
    <property type="entry name" value="NAD kinase/diacylglycerol kinase-like"/>
    <property type="match status" value="1"/>
</dbReference>
<gene>
    <name evidence="1" type="primary">nadK</name>
    <name type="ordered locus">YN1551_0035</name>
</gene>
<protein>
    <recommendedName>
        <fullName evidence="1">NAD kinase</fullName>
        <ecNumber evidence="1">2.7.1.23</ecNumber>
    </recommendedName>
    <alternativeName>
        <fullName evidence="1">ATP-dependent NAD kinase</fullName>
    </alternativeName>
</protein>
<organism>
    <name type="scientific">Saccharolobus islandicus (strain Y.N.15.51 / Yellowstone #2)</name>
    <name type="common">Sulfolobus islandicus</name>
    <dbReference type="NCBI Taxonomy" id="419942"/>
    <lineage>
        <taxon>Archaea</taxon>
        <taxon>Thermoproteota</taxon>
        <taxon>Thermoprotei</taxon>
        <taxon>Sulfolobales</taxon>
        <taxon>Sulfolobaceae</taxon>
        <taxon>Saccharolobus</taxon>
    </lineage>
</organism>
<accession>C3NJ67</accession>
<proteinExistence type="inferred from homology"/>
<feature type="chain" id="PRO_1000205429" description="NAD kinase">
    <location>
        <begin position="1"/>
        <end position="249"/>
    </location>
</feature>
<feature type="active site" description="Proton acceptor" evidence="1">
    <location>
        <position position="45"/>
    </location>
</feature>
<feature type="binding site" evidence="1">
    <location>
        <begin position="45"/>
        <end position="46"/>
    </location>
    <ligand>
        <name>NAD(+)</name>
        <dbReference type="ChEBI" id="CHEBI:57540"/>
    </ligand>
</feature>
<feature type="binding site" evidence="1">
    <location>
        <position position="50"/>
    </location>
    <ligand>
        <name>NAD(+)</name>
        <dbReference type="ChEBI" id="CHEBI:57540"/>
    </ligand>
</feature>
<feature type="binding site" evidence="1">
    <location>
        <begin position="110"/>
        <end position="111"/>
    </location>
    <ligand>
        <name>NAD(+)</name>
        <dbReference type="ChEBI" id="CHEBI:57540"/>
    </ligand>
</feature>
<feature type="binding site" evidence="1">
    <location>
        <position position="138"/>
    </location>
    <ligand>
        <name>NAD(+)</name>
        <dbReference type="ChEBI" id="CHEBI:57540"/>
    </ligand>
</feature>
<feature type="binding site" evidence="1">
    <location>
        <begin position="149"/>
        <end position="154"/>
    </location>
    <ligand>
        <name>NAD(+)</name>
        <dbReference type="ChEBI" id="CHEBI:57540"/>
    </ligand>
</feature>
<keyword id="KW-0067">ATP-binding</keyword>
<keyword id="KW-0963">Cytoplasm</keyword>
<keyword id="KW-0418">Kinase</keyword>
<keyword id="KW-0520">NAD</keyword>
<keyword id="KW-0521">NADP</keyword>
<keyword id="KW-0547">Nucleotide-binding</keyword>
<keyword id="KW-0808">Transferase</keyword>
<sequence>MRVKIVSKPTSQLNNIIEKIKNISTKLGFEVVDKDFDYVIAVGGDGTLLRAVKQNKPVIAVKAGRRGLLMDVPVDKFEEALLRLKKGDYEEEEYMLLEMIYNDKVELGFNEVGILYDRPEAIKVGISFDTERVSVEGDGVLVSTPQGSSGWGMSATNSLLYKDLSAIEIIFVNPIFYYLRSVVIPPKPLTLRLEDKGYPQTARAVVDGEVVTLIKTNQEITVRVSQRKAKILRFFKLDLIGEVLHAYHI</sequence>
<comment type="function">
    <text evidence="1">Involved in the regulation of the intracellular balance of NAD and NADP, and is a key enzyme in the biosynthesis of NADP. Catalyzes specifically the phosphorylation on 2'-hydroxyl of the adenosine moiety of NAD to yield NADP.</text>
</comment>
<comment type="catalytic activity">
    <reaction evidence="1">
        <text>NAD(+) + ATP = ADP + NADP(+) + H(+)</text>
        <dbReference type="Rhea" id="RHEA:18629"/>
        <dbReference type="ChEBI" id="CHEBI:15378"/>
        <dbReference type="ChEBI" id="CHEBI:30616"/>
        <dbReference type="ChEBI" id="CHEBI:57540"/>
        <dbReference type="ChEBI" id="CHEBI:58349"/>
        <dbReference type="ChEBI" id="CHEBI:456216"/>
        <dbReference type="EC" id="2.7.1.23"/>
    </reaction>
</comment>
<comment type="cofactor">
    <cofactor evidence="1">
        <name>a divalent metal cation</name>
        <dbReference type="ChEBI" id="CHEBI:60240"/>
    </cofactor>
</comment>
<comment type="subcellular location">
    <subcellularLocation>
        <location evidence="1">Cytoplasm</location>
    </subcellularLocation>
</comment>
<comment type="similarity">
    <text evidence="1">Belongs to the NAD kinase family.</text>
</comment>
<reference key="1">
    <citation type="journal article" date="2009" name="Proc. Natl. Acad. Sci. U.S.A.">
        <title>Biogeography of the Sulfolobus islandicus pan-genome.</title>
        <authorList>
            <person name="Reno M.L."/>
            <person name="Held N.L."/>
            <person name="Fields C.J."/>
            <person name="Burke P.V."/>
            <person name="Whitaker R.J."/>
        </authorList>
    </citation>
    <scope>NUCLEOTIDE SEQUENCE [LARGE SCALE GENOMIC DNA]</scope>
    <source>
        <strain>Y.N.15.51 / Yellowstone #2</strain>
    </source>
</reference>
<name>NADK_SACI1</name>
<evidence type="ECO:0000255" key="1">
    <source>
        <dbReference type="HAMAP-Rule" id="MF_00361"/>
    </source>
</evidence>